<feature type="propeptide" id="PRO_0000008841" evidence="2">
    <location>
        <begin position="1"/>
        <end position="8"/>
    </location>
</feature>
<feature type="chain" id="PRO_0000008842" description="Ferredoxin">
    <location>
        <begin position="9"/>
        <end position="100"/>
    </location>
</feature>
<feature type="domain" description="2Fe-2S ferredoxin-type" evidence="1">
    <location>
        <begin position="9"/>
        <end position="100"/>
    </location>
</feature>
<feature type="binding site">
    <location>
        <position position="46"/>
    </location>
    <ligand>
        <name>[2Fe-2S] cluster</name>
        <dbReference type="ChEBI" id="CHEBI:190135"/>
    </ligand>
</feature>
<feature type="binding site">
    <location>
        <position position="52"/>
    </location>
    <ligand>
        <name>[2Fe-2S] cluster</name>
        <dbReference type="ChEBI" id="CHEBI:190135"/>
    </ligand>
</feature>
<feature type="binding site">
    <location>
        <position position="55"/>
    </location>
    <ligand>
        <name>[2Fe-2S] cluster</name>
        <dbReference type="ChEBI" id="CHEBI:190135"/>
    </ligand>
</feature>
<feature type="binding site">
    <location>
        <position position="85"/>
    </location>
    <ligand>
        <name>[2Fe-2S] cluster</name>
        <dbReference type="ChEBI" id="CHEBI:190135"/>
    </ligand>
</feature>
<feature type="strand" evidence="3">
    <location>
        <begin position="10"/>
        <end position="15"/>
    </location>
</feature>
<feature type="strand" evidence="3">
    <location>
        <begin position="18"/>
        <end position="23"/>
    </location>
</feature>
<feature type="helix" evidence="3">
    <location>
        <begin position="30"/>
        <end position="35"/>
    </location>
</feature>
<feature type="turn" evidence="3">
    <location>
        <begin position="36"/>
        <end position="38"/>
    </location>
</feature>
<feature type="strand" evidence="3">
    <location>
        <begin position="47"/>
        <end position="52"/>
    </location>
</feature>
<feature type="strand" evidence="3">
    <location>
        <begin position="56"/>
        <end position="62"/>
    </location>
</feature>
<feature type="helix" evidence="3">
    <location>
        <begin position="68"/>
        <end position="74"/>
    </location>
</feature>
<feature type="strand" evidence="3">
    <location>
        <begin position="81"/>
        <end position="83"/>
    </location>
</feature>
<feature type="helix" evidence="3">
    <location>
        <begin position="84"/>
        <end position="86"/>
    </location>
</feature>
<feature type="helix" evidence="3">
    <location>
        <begin position="91"/>
        <end position="93"/>
    </location>
</feature>
<feature type="strand" evidence="3">
    <location>
        <begin position="97"/>
        <end position="99"/>
    </location>
</feature>
<dbReference type="EMBL" id="M33717">
    <property type="protein sequence ID" value="AAA30324.1"/>
    <property type="molecule type" value="Genomic_DNA"/>
</dbReference>
<dbReference type="PIR" id="A36003">
    <property type="entry name" value="A36003"/>
</dbReference>
<dbReference type="PDB" id="1L5P">
    <property type="method" value="X-ray"/>
    <property type="resolution" value="2.20 A"/>
    <property type="chains" value="A/B/C=9-100"/>
</dbReference>
<dbReference type="PDBsum" id="1L5P"/>
<dbReference type="SMR" id="P21149"/>
<dbReference type="VEuPathDB" id="TrichDB:TVAG_003900"/>
<dbReference type="VEuPathDB" id="TrichDB:TVAGG3_0476390"/>
<dbReference type="EvolutionaryTrace" id="P21149"/>
<dbReference type="GO" id="GO:0042566">
    <property type="term" value="C:hydrogenosome"/>
    <property type="evidence" value="ECO:0007669"/>
    <property type="project" value="UniProtKB-SubCell"/>
</dbReference>
<dbReference type="GO" id="GO:0051537">
    <property type="term" value="F:2 iron, 2 sulfur cluster binding"/>
    <property type="evidence" value="ECO:0007669"/>
    <property type="project" value="UniProtKB-KW"/>
</dbReference>
<dbReference type="GO" id="GO:0046872">
    <property type="term" value="F:metal ion binding"/>
    <property type="evidence" value="ECO:0007669"/>
    <property type="project" value="UniProtKB-KW"/>
</dbReference>
<dbReference type="CDD" id="cd00207">
    <property type="entry name" value="fer2"/>
    <property type="match status" value="1"/>
</dbReference>
<dbReference type="Gene3D" id="3.10.20.30">
    <property type="match status" value="1"/>
</dbReference>
<dbReference type="InterPro" id="IPR036010">
    <property type="entry name" value="2Fe-2S_ferredoxin-like_sf"/>
</dbReference>
<dbReference type="InterPro" id="IPR001041">
    <property type="entry name" value="2Fe-2S_ferredoxin-type"/>
</dbReference>
<dbReference type="InterPro" id="IPR012675">
    <property type="entry name" value="Beta-grasp_dom_sf"/>
</dbReference>
<dbReference type="Pfam" id="PF00111">
    <property type="entry name" value="Fer2"/>
    <property type="match status" value="1"/>
</dbReference>
<dbReference type="SUPFAM" id="SSF54292">
    <property type="entry name" value="2Fe-2S ferredoxin-like"/>
    <property type="match status" value="1"/>
</dbReference>
<dbReference type="PROSITE" id="PS51085">
    <property type="entry name" value="2FE2S_FER_2"/>
    <property type="match status" value="1"/>
</dbReference>
<comment type="function">
    <text>Ferredoxins are iron-sulfur proteins that transfer electrons in a wide variety of metabolic reactions. It links pyruvate:ferredoxin oxidoreductase to hydrogenase.</text>
</comment>
<comment type="cofactor">
    <cofactor>
        <name>[2Fe-2S] cluster</name>
        <dbReference type="ChEBI" id="CHEBI:190135"/>
    </cofactor>
    <text>Binds 1 [2Fe-2S] cluster.</text>
</comment>
<comment type="subcellular location">
    <subcellularLocation>
        <location>Hydrogenosome</location>
    </subcellularLocation>
</comment>
<comment type="miscellaneous">
    <text>The propeptide may play a role in the targeting of this protein to the organelle.</text>
</comment>
<sequence length="100" mass="10675">MLSQVCRFGTITAVKGGVKKQLKFEDDQTLFTVLTEAGLMSADDTCQGNKACGKCICKHVSGKVAAEDDEKEFLEDQPANARLACAITLSGENDGAVFEL</sequence>
<reference key="1">
    <citation type="journal article" date="1990" name="Proc. Natl. Acad. Sci. U.S.A.">
        <title>Molecular analysis of the hydrogenosomal ferredoxin of the anaerobic protist Trichomonas vaginalis.</title>
        <authorList>
            <person name="Johnson P.J."/>
            <person name="D'Oliveira C.E."/>
            <person name="Gorrell T.E."/>
            <person name="Mueller M."/>
        </authorList>
    </citation>
    <scope>NUCLEOTIDE SEQUENCE [GENOMIC DNA]</scope>
    <scope>PROTEIN SEQUENCE OF 9-100</scope>
    <source>
        <strain>ATCC 30001 / NIH-C1</strain>
    </source>
</reference>
<reference key="2">
    <citation type="journal article" date="2002" name="J. Mol. Biol.">
        <title>The crystal structure of Trichomonas vaginalis ferredoxin provides insight into metronidazole activation.</title>
        <authorList>
            <person name="Crossnoe C.R."/>
            <person name="Germanas J.P."/>
            <person name="LeMagueres P."/>
            <person name="Mustata G."/>
            <person name="Krause K.L."/>
        </authorList>
    </citation>
    <scope>X-RAY CRYSTALLOGRAPHY (2.2 ANGSTROMS) OF 9-100</scope>
</reference>
<accession>P21149</accession>
<organism>
    <name type="scientific">Trichomonas vaginalis</name>
    <dbReference type="NCBI Taxonomy" id="5722"/>
    <lineage>
        <taxon>Eukaryota</taxon>
        <taxon>Metamonada</taxon>
        <taxon>Parabasalia</taxon>
        <taxon>Trichomonadida</taxon>
        <taxon>Trichomonadidae</taxon>
        <taxon>Trichomonas</taxon>
    </lineage>
</organism>
<evidence type="ECO:0000255" key="1">
    <source>
        <dbReference type="PROSITE-ProRule" id="PRU00465"/>
    </source>
</evidence>
<evidence type="ECO:0000269" key="2">
    <source>
    </source>
</evidence>
<evidence type="ECO:0007829" key="3">
    <source>
        <dbReference type="PDB" id="1L5P"/>
    </source>
</evidence>
<proteinExistence type="evidence at protein level"/>
<name>FER_TRIVA</name>
<protein>
    <recommendedName>
        <fullName>Ferredoxin</fullName>
    </recommendedName>
</protein>
<keyword id="KW-0001">2Fe-2S</keyword>
<keyword id="KW-0002">3D-structure</keyword>
<keyword id="KW-0903">Direct protein sequencing</keyword>
<keyword id="KW-0249">Electron transport</keyword>
<keyword id="KW-0377">Hydrogenosome</keyword>
<keyword id="KW-0408">Iron</keyword>
<keyword id="KW-0411">Iron-sulfur</keyword>
<keyword id="KW-0479">Metal-binding</keyword>
<keyword id="KW-0813">Transport</keyword>